<comment type="function">
    <text evidence="1">Binds as a heterodimer with protein bS6 to the central domain of the 16S rRNA, where it helps stabilize the platform of the 30S subunit.</text>
</comment>
<comment type="subunit">
    <text evidence="1">Part of the 30S ribosomal subunit. Forms a tight heterodimer with protein bS6.</text>
</comment>
<comment type="similarity">
    <text evidence="1">Belongs to the bacterial ribosomal protein bS18 family.</text>
</comment>
<gene>
    <name evidence="1" type="primary">rpsR</name>
    <name type="ordered locus">PFLU_0534</name>
</gene>
<accession>C3KE68</accession>
<proteinExistence type="inferred from homology"/>
<dbReference type="EMBL" id="AM181176">
    <property type="protein sequence ID" value="CAY46807.1"/>
    <property type="molecule type" value="Genomic_DNA"/>
</dbReference>
<dbReference type="RefSeq" id="WP_002551829.1">
    <property type="nucleotide sequence ID" value="NC_012660.1"/>
</dbReference>
<dbReference type="SMR" id="C3KE68"/>
<dbReference type="STRING" id="294.SRM1_00596"/>
<dbReference type="GeneID" id="98109115"/>
<dbReference type="eggNOG" id="COG0238">
    <property type="taxonomic scope" value="Bacteria"/>
</dbReference>
<dbReference type="HOGENOM" id="CLU_148710_2_3_6"/>
<dbReference type="OrthoDB" id="9812008at2"/>
<dbReference type="GO" id="GO:0022627">
    <property type="term" value="C:cytosolic small ribosomal subunit"/>
    <property type="evidence" value="ECO:0007669"/>
    <property type="project" value="TreeGrafter"/>
</dbReference>
<dbReference type="GO" id="GO:0070181">
    <property type="term" value="F:small ribosomal subunit rRNA binding"/>
    <property type="evidence" value="ECO:0007669"/>
    <property type="project" value="TreeGrafter"/>
</dbReference>
<dbReference type="GO" id="GO:0003735">
    <property type="term" value="F:structural constituent of ribosome"/>
    <property type="evidence" value="ECO:0007669"/>
    <property type="project" value="InterPro"/>
</dbReference>
<dbReference type="GO" id="GO:0006412">
    <property type="term" value="P:translation"/>
    <property type="evidence" value="ECO:0007669"/>
    <property type="project" value="UniProtKB-UniRule"/>
</dbReference>
<dbReference type="FunFam" id="4.10.640.10:FF:000001">
    <property type="entry name" value="30S ribosomal protein S18"/>
    <property type="match status" value="1"/>
</dbReference>
<dbReference type="Gene3D" id="4.10.640.10">
    <property type="entry name" value="Ribosomal protein S18"/>
    <property type="match status" value="1"/>
</dbReference>
<dbReference type="HAMAP" id="MF_00270">
    <property type="entry name" value="Ribosomal_bS18"/>
    <property type="match status" value="1"/>
</dbReference>
<dbReference type="InterPro" id="IPR001648">
    <property type="entry name" value="Ribosomal_bS18"/>
</dbReference>
<dbReference type="InterPro" id="IPR018275">
    <property type="entry name" value="Ribosomal_bS18_CS"/>
</dbReference>
<dbReference type="InterPro" id="IPR036870">
    <property type="entry name" value="Ribosomal_bS18_sf"/>
</dbReference>
<dbReference type="NCBIfam" id="TIGR00165">
    <property type="entry name" value="S18"/>
    <property type="match status" value="1"/>
</dbReference>
<dbReference type="PANTHER" id="PTHR13479">
    <property type="entry name" value="30S RIBOSOMAL PROTEIN S18"/>
    <property type="match status" value="1"/>
</dbReference>
<dbReference type="PANTHER" id="PTHR13479:SF40">
    <property type="entry name" value="SMALL RIBOSOMAL SUBUNIT PROTEIN BS18M"/>
    <property type="match status" value="1"/>
</dbReference>
<dbReference type="Pfam" id="PF01084">
    <property type="entry name" value="Ribosomal_S18"/>
    <property type="match status" value="1"/>
</dbReference>
<dbReference type="PRINTS" id="PR00974">
    <property type="entry name" value="RIBOSOMALS18"/>
</dbReference>
<dbReference type="SUPFAM" id="SSF46911">
    <property type="entry name" value="Ribosomal protein S18"/>
    <property type="match status" value="1"/>
</dbReference>
<dbReference type="PROSITE" id="PS00057">
    <property type="entry name" value="RIBOSOMAL_S18"/>
    <property type="match status" value="1"/>
</dbReference>
<organism>
    <name type="scientific">Pseudomonas fluorescens (strain SBW25)</name>
    <dbReference type="NCBI Taxonomy" id="216595"/>
    <lineage>
        <taxon>Bacteria</taxon>
        <taxon>Pseudomonadati</taxon>
        <taxon>Pseudomonadota</taxon>
        <taxon>Gammaproteobacteria</taxon>
        <taxon>Pseudomonadales</taxon>
        <taxon>Pseudomonadaceae</taxon>
        <taxon>Pseudomonas</taxon>
    </lineage>
</organism>
<evidence type="ECO:0000255" key="1">
    <source>
        <dbReference type="HAMAP-Rule" id="MF_00270"/>
    </source>
</evidence>
<evidence type="ECO:0000305" key="2"/>
<feature type="chain" id="PRO_1000204734" description="Small ribosomal subunit protein bS18">
    <location>
        <begin position="1"/>
        <end position="76"/>
    </location>
</feature>
<protein>
    <recommendedName>
        <fullName evidence="1">Small ribosomal subunit protein bS18</fullName>
    </recommendedName>
    <alternativeName>
        <fullName evidence="2">30S ribosomal protein S18</fullName>
    </alternativeName>
</protein>
<name>RS18_PSEFS</name>
<reference key="1">
    <citation type="journal article" date="2009" name="Genome Biol.">
        <title>Genomic and genetic analyses of diversity and plant interactions of Pseudomonas fluorescens.</title>
        <authorList>
            <person name="Silby M.W."/>
            <person name="Cerdeno-Tarraga A.M."/>
            <person name="Vernikos G.S."/>
            <person name="Giddens S.R."/>
            <person name="Jackson R.W."/>
            <person name="Preston G.M."/>
            <person name="Zhang X.-X."/>
            <person name="Moon C.D."/>
            <person name="Gehrig S.M."/>
            <person name="Godfrey S.A.C."/>
            <person name="Knight C.G."/>
            <person name="Malone J.G."/>
            <person name="Robinson Z."/>
            <person name="Spiers A.J."/>
            <person name="Harris S."/>
            <person name="Challis G.L."/>
            <person name="Yaxley A.M."/>
            <person name="Harris D."/>
            <person name="Seeger K."/>
            <person name="Murphy L."/>
            <person name="Rutter S."/>
            <person name="Squares R."/>
            <person name="Quail M.A."/>
            <person name="Saunders E."/>
            <person name="Mavromatis K."/>
            <person name="Brettin T.S."/>
            <person name="Bentley S.D."/>
            <person name="Hothersall J."/>
            <person name="Stephens E."/>
            <person name="Thomas C.M."/>
            <person name="Parkhill J."/>
            <person name="Levy S.B."/>
            <person name="Rainey P.B."/>
            <person name="Thomson N.R."/>
        </authorList>
    </citation>
    <scope>NUCLEOTIDE SEQUENCE [LARGE SCALE GENOMIC DNA]</scope>
    <source>
        <strain>SBW25</strain>
    </source>
</reference>
<sequence length="76" mass="8917">MARFFRRRKFCRFTAEDVKEIDYKDLNTLKAYVSETGKIVPSRITGTKARYQRQLATAIKRARFLALLAYTDSHGR</sequence>
<keyword id="KW-0687">Ribonucleoprotein</keyword>
<keyword id="KW-0689">Ribosomal protein</keyword>
<keyword id="KW-0694">RNA-binding</keyword>
<keyword id="KW-0699">rRNA-binding</keyword>